<evidence type="ECO:0000255" key="1">
    <source>
        <dbReference type="HAMAP-Rule" id="MF_01317"/>
    </source>
</evidence>
<protein>
    <recommendedName>
        <fullName evidence="1">Photosystem II reaction center protein L</fullName>
        <shortName evidence="1">PSII-L</shortName>
    </recommendedName>
</protein>
<accession>A4QJL4</accession>
<reference key="1">
    <citation type="submission" date="2007-03" db="EMBL/GenBank/DDBJ databases">
        <title>Sequencing analysis of Aethionema grandiflorum chloroplast DNA.</title>
        <authorList>
            <person name="Hosouchi T."/>
            <person name="Tsuruoka H."/>
            <person name="Kotani H."/>
        </authorList>
    </citation>
    <scope>NUCLEOTIDE SEQUENCE [LARGE SCALE GENOMIC DNA]</scope>
</reference>
<name>PSBL_AETGR</name>
<comment type="function">
    <text evidence="1">One of the components of the core complex of photosystem II (PSII). PSII is a light-driven water:plastoquinone oxidoreductase that uses light energy to abstract electrons from H(2)O, generating O(2) and a proton gradient subsequently used for ATP formation. It consists of a core antenna complex that captures photons, and an electron transfer chain that converts photonic excitation into a charge separation. This subunit is found at the monomer-monomer interface and is required for correct PSII assembly and/or dimerization.</text>
</comment>
<comment type="subunit">
    <text evidence="1">PSII is composed of 1 copy each of membrane proteins PsbA, PsbB, PsbC, PsbD, PsbE, PsbF, PsbH, PsbI, PsbJ, PsbK, PsbL, PsbM, PsbT, PsbX, PsbY, PsbZ, Psb30/Ycf12, at least 3 peripheral proteins of the oxygen-evolving complex and a large number of cofactors. It forms dimeric complexes.</text>
</comment>
<comment type="subcellular location">
    <subcellularLocation>
        <location evidence="1">Plastid</location>
        <location evidence="1">Chloroplast thylakoid membrane</location>
        <topology evidence="1">Single-pass membrane protein</topology>
    </subcellularLocation>
</comment>
<comment type="similarity">
    <text evidence="1">Belongs to the PsbL family.</text>
</comment>
<organism>
    <name type="scientific">Aethionema grandiflorum</name>
    <name type="common">Persian stone-cress</name>
    <dbReference type="NCBI Taxonomy" id="72657"/>
    <lineage>
        <taxon>Eukaryota</taxon>
        <taxon>Viridiplantae</taxon>
        <taxon>Streptophyta</taxon>
        <taxon>Embryophyta</taxon>
        <taxon>Tracheophyta</taxon>
        <taxon>Spermatophyta</taxon>
        <taxon>Magnoliopsida</taxon>
        <taxon>eudicotyledons</taxon>
        <taxon>Gunneridae</taxon>
        <taxon>Pentapetalae</taxon>
        <taxon>rosids</taxon>
        <taxon>malvids</taxon>
        <taxon>Brassicales</taxon>
        <taxon>Brassicaceae</taxon>
        <taxon>Aethionemeae</taxon>
        <taxon>Aethionema</taxon>
    </lineage>
</organism>
<gene>
    <name evidence="1" type="primary">psbL</name>
</gene>
<sequence>MTQSNPNEQNVELNRTSLYWGLLLIFVLAILFSNYFFN</sequence>
<dbReference type="EMBL" id="AP009367">
    <property type="protein sequence ID" value="BAF49869.1"/>
    <property type="molecule type" value="Genomic_DNA"/>
</dbReference>
<dbReference type="RefSeq" id="YP_001123045.1">
    <property type="nucleotide sequence ID" value="NC_009266.1"/>
</dbReference>
<dbReference type="SMR" id="A4QJL4"/>
<dbReference type="GeneID" id="4962294"/>
<dbReference type="GO" id="GO:0009535">
    <property type="term" value="C:chloroplast thylakoid membrane"/>
    <property type="evidence" value="ECO:0007669"/>
    <property type="project" value="UniProtKB-SubCell"/>
</dbReference>
<dbReference type="GO" id="GO:0009539">
    <property type="term" value="C:photosystem II reaction center"/>
    <property type="evidence" value="ECO:0007669"/>
    <property type="project" value="InterPro"/>
</dbReference>
<dbReference type="GO" id="GO:0015979">
    <property type="term" value="P:photosynthesis"/>
    <property type="evidence" value="ECO:0007669"/>
    <property type="project" value="UniProtKB-UniRule"/>
</dbReference>
<dbReference type="HAMAP" id="MF_01317">
    <property type="entry name" value="PSII_PsbL"/>
    <property type="match status" value="1"/>
</dbReference>
<dbReference type="InterPro" id="IPR003372">
    <property type="entry name" value="PSII_PsbL"/>
</dbReference>
<dbReference type="InterPro" id="IPR037266">
    <property type="entry name" value="PSII_PsbL_sf"/>
</dbReference>
<dbReference type="NCBIfam" id="NF001972">
    <property type="entry name" value="PRK00753.1"/>
    <property type="match status" value="1"/>
</dbReference>
<dbReference type="Pfam" id="PF02419">
    <property type="entry name" value="PsbL"/>
    <property type="match status" value="1"/>
</dbReference>
<dbReference type="SUPFAM" id="SSF161017">
    <property type="entry name" value="Photosystem II reaction center protein L, PsbL"/>
    <property type="match status" value="1"/>
</dbReference>
<feature type="chain" id="PRO_0000306220" description="Photosystem II reaction center protein L">
    <location>
        <begin position="1"/>
        <end position="38"/>
    </location>
</feature>
<feature type="transmembrane region" description="Helical" evidence="1">
    <location>
        <begin position="17"/>
        <end position="37"/>
    </location>
</feature>
<geneLocation type="chloroplast"/>
<proteinExistence type="inferred from homology"/>
<keyword id="KW-0150">Chloroplast</keyword>
<keyword id="KW-0472">Membrane</keyword>
<keyword id="KW-0602">Photosynthesis</keyword>
<keyword id="KW-0604">Photosystem II</keyword>
<keyword id="KW-0934">Plastid</keyword>
<keyword id="KW-0674">Reaction center</keyword>
<keyword id="KW-0793">Thylakoid</keyword>
<keyword id="KW-0812">Transmembrane</keyword>
<keyword id="KW-1133">Transmembrane helix</keyword>